<gene>
    <name evidence="1" type="primary">psbD</name>
</gene>
<evidence type="ECO:0000255" key="1">
    <source>
        <dbReference type="HAMAP-Rule" id="MF_01383"/>
    </source>
</evidence>
<dbReference type="EC" id="1.10.3.9" evidence="1"/>
<dbReference type="EMBL" id="U38804">
    <property type="protein sequence ID" value="AAC08243.1"/>
    <property type="molecule type" value="Genomic_DNA"/>
</dbReference>
<dbReference type="PIR" id="S73278">
    <property type="entry name" value="S73278"/>
</dbReference>
<dbReference type="RefSeq" id="NP_053967.1">
    <property type="nucleotide sequence ID" value="NC_000925.1"/>
</dbReference>
<dbReference type="SMR" id="P51357"/>
<dbReference type="GeneID" id="809993"/>
<dbReference type="GO" id="GO:0009535">
    <property type="term" value="C:chloroplast thylakoid membrane"/>
    <property type="evidence" value="ECO:0007669"/>
    <property type="project" value="UniProtKB-SubCell"/>
</dbReference>
<dbReference type="GO" id="GO:0009523">
    <property type="term" value="C:photosystem II"/>
    <property type="evidence" value="ECO:0007669"/>
    <property type="project" value="UniProtKB-KW"/>
</dbReference>
<dbReference type="GO" id="GO:0016168">
    <property type="term" value="F:chlorophyll binding"/>
    <property type="evidence" value="ECO:0007669"/>
    <property type="project" value="UniProtKB-UniRule"/>
</dbReference>
<dbReference type="GO" id="GO:0045156">
    <property type="term" value="F:electron transporter, transferring electrons within the cyclic electron transport pathway of photosynthesis activity"/>
    <property type="evidence" value="ECO:0007669"/>
    <property type="project" value="InterPro"/>
</dbReference>
<dbReference type="GO" id="GO:0005506">
    <property type="term" value="F:iron ion binding"/>
    <property type="evidence" value="ECO:0007669"/>
    <property type="project" value="UniProtKB-UniRule"/>
</dbReference>
<dbReference type="GO" id="GO:0016491">
    <property type="term" value="F:oxidoreductase activity"/>
    <property type="evidence" value="ECO:0007669"/>
    <property type="project" value="UniProtKB-KW"/>
</dbReference>
<dbReference type="GO" id="GO:0009772">
    <property type="term" value="P:photosynthetic electron transport in photosystem II"/>
    <property type="evidence" value="ECO:0007669"/>
    <property type="project" value="InterPro"/>
</dbReference>
<dbReference type="CDD" id="cd09288">
    <property type="entry name" value="Photosystem-II_D2"/>
    <property type="match status" value="1"/>
</dbReference>
<dbReference type="FunFam" id="1.20.85.10:FF:000001">
    <property type="entry name" value="photosystem II D2 protein-like"/>
    <property type="match status" value="1"/>
</dbReference>
<dbReference type="Gene3D" id="1.20.85.10">
    <property type="entry name" value="Photosystem II protein D1-like"/>
    <property type="match status" value="1"/>
</dbReference>
<dbReference type="HAMAP" id="MF_01383">
    <property type="entry name" value="PSII_PsbD_D2"/>
    <property type="match status" value="1"/>
</dbReference>
<dbReference type="InterPro" id="IPR055266">
    <property type="entry name" value="D1/D2"/>
</dbReference>
<dbReference type="InterPro" id="IPR036854">
    <property type="entry name" value="Photo_II_D1/D2_sf"/>
</dbReference>
<dbReference type="InterPro" id="IPR000484">
    <property type="entry name" value="Photo_RC_L/M"/>
</dbReference>
<dbReference type="InterPro" id="IPR055265">
    <property type="entry name" value="Photo_RC_L/M_CS"/>
</dbReference>
<dbReference type="InterPro" id="IPR005868">
    <property type="entry name" value="PSII_PsbD/D2"/>
</dbReference>
<dbReference type="NCBIfam" id="TIGR01152">
    <property type="entry name" value="psbD"/>
    <property type="match status" value="1"/>
</dbReference>
<dbReference type="PANTHER" id="PTHR33149:SF12">
    <property type="entry name" value="PHOTOSYSTEM II D2 PROTEIN"/>
    <property type="match status" value="1"/>
</dbReference>
<dbReference type="PANTHER" id="PTHR33149">
    <property type="entry name" value="PHOTOSYSTEM II PROTEIN D1"/>
    <property type="match status" value="1"/>
</dbReference>
<dbReference type="Pfam" id="PF00124">
    <property type="entry name" value="Photo_RC"/>
    <property type="match status" value="1"/>
</dbReference>
<dbReference type="PRINTS" id="PR00256">
    <property type="entry name" value="REACTNCENTRE"/>
</dbReference>
<dbReference type="SUPFAM" id="SSF81483">
    <property type="entry name" value="Bacterial photosystem II reaction centre, L and M subunits"/>
    <property type="match status" value="1"/>
</dbReference>
<dbReference type="PROSITE" id="PS00244">
    <property type="entry name" value="REACTION_CENTER"/>
    <property type="match status" value="1"/>
</dbReference>
<organism>
    <name type="scientific">Porphyra purpurea</name>
    <name type="common">Red seaweed</name>
    <name type="synonym">Ulva purpurea</name>
    <dbReference type="NCBI Taxonomy" id="2787"/>
    <lineage>
        <taxon>Eukaryota</taxon>
        <taxon>Rhodophyta</taxon>
        <taxon>Bangiophyceae</taxon>
        <taxon>Bangiales</taxon>
        <taxon>Bangiaceae</taxon>
        <taxon>Porphyra</taxon>
    </lineage>
</organism>
<keyword id="KW-0148">Chlorophyll</keyword>
<keyword id="KW-0150">Chloroplast</keyword>
<keyword id="KW-0157">Chromophore</keyword>
<keyword id="KW-0249">Electron transport</keyword>
<keyword id="KW-0408">Iron</keyword>
<keyword id="KW-0460">Magnesium</keyword>
<keyword id="KW-0472">Membrane</keyword>
<keyword id="KW-0479">Metal-binding</keyword>
<keyword id="KW-0560">Oxidoreductase</keyword>
<keyword id="KW-0602">Photosynthesis</keyword>
<keyword id="KW-0604">Photosystem II</keyword>
<keyword id="KW-0934">Plastid</keyword>
<keyword id="KW-0793">Thylakoid</keyword>
<keyword id="KW-0812">Transmembrane</keyword>
<keyword id="KW-1133">Transmembrane helix</keyword>
<keyword id="KW-0813">Transport</keyword>
<sequence>MTIAIGQEKTRGGFDLVDDWLKRDRFVFVGWSGLLLFPCAYLAVGGWLTGTTFVTSWYTHGLASSYLEGCNFLTAAVSTPANSMGHSLLFLWGPEAQGDFTRWCQIGGLWAFIALHGSFGLIGFCLRQFEIARLVGLRPYNAIAFSGPIAVFVSVFLMYPLGQASWFFAPSLGVAAIFRFLLFLQGFHNWTLNPFHMMGVAGILGGALLCAIHGATVQNTLFEDGDAADTFRAFTPTQSEETYSMVTANRFWSQIFGVAFSNKRWLHFFMLFVPVTGLWTSAFGIVGLALNLRAYDFVSQELRAAEDPEFETFYTKNILLNEGIRSWMAAQDQPHENFIFPEEVLPRGNAL</sequence>
<reference key="1">
    <citation type="journal article" date="1995" name="Plant Mol. Biol. Rep.">
        <title>Complete nucleotide sequence of the Porphyra purpurea chloroplast genome.</title>
        <authorList>
            <person name="Reith M.E."/>
            <person name="Munholland J."/>
        </authorList>
    </citation>
    <scope>NUCLEOTIDE SEQUENCE [LARGE SCALE GENOMIC DNA]</scope>
    <source>
        <strain>Avonport</strain>
    </source>
</reference>
<accession>P51357</accession>
<name>PSBD_PORPU</name>
<feature type="chain" id="PRO_0000090519" description="Photosystem II D2 protein">
    <location>
        <begin position="1"/>
        <end position="351"/>
    </location>
</feature>
<feature type="transmembrane region" description="Helical" evidence="1">
    <location>
        <begin position="39"/>
        <end position="59"/>
    </location>
</feature>
<feature type="transmembrane region" description="Helical" evidence="1">
    <location>
        <begin position="123"/>
        <end position="139"/>
    </location>
</feature>
<feature type="transmembrane region" description="Helical" evidence="1">
    <location>
        <begin position="151"/>
        <end position="164"/>
    </location>
</feature>
<feature type="transmembrane region" description="Helical" evidence="1">
    <location>
        <begin position="206"/>
        <end position="226"/>
    </location>
</feature>
<feature type="transmembrane region" description="Helical" evidence="1">
    <location>
        <begin position="277"/>
        <end position="293"/>
    </location>
</feature>
<feature type="binding site" description="axial binding residue" evidence="1">
    <location>
        <position position="116"/>
    </location>
    <ligand>
        <name>chlorophyll a</name>
        <dbReference type="ChEBI" id="CHEBI:58416"/>
        <label>ChlzD2</label>
    </ligand>
    <ligandPart>
        <name>Mg</name>
        <dbReference type="ChEBI" id="CHEBI:25107"/>
    </ligandPart>
</feature>
<feature type="binding site" evidence="1">
    <location>
        <position position="128"/>
    </location>
    <ligand>
        <name>pheophytin a</name>
        <dbReference type="ChEBI" id="CHEBI:136840"/>
        <label>D2</label>
    </ligand>
</feature>
<feature type="binding site" evidence="1">
    <location>
        <position position="141"/>
    </location>
    <ligand>
        <name>pheophytin a</name>
        <dbReference type="ChEBI" id="CHEBI:136840"/>
        <label>D2</label>
    </ligand>
</feature>
<feature type="binding site" description="axial binding residue" evidence="1">
    <location>
        <position position="196"/>
    </location>
    <ligand>
        <name>chlorophyll a</name>
        <dbReference type="ChEBI" id="CHEBI:58416"/>
        <label>PD2</label>
    </ligand>
    <ligandPart>
        <name>Mg</name>
        <dbReference type="ChEBI" id="CHEBI:25107"/>
    </ligandPart>
</feature>
<feature type="binding site" evidence="1">
    <location>
        <position position="213"/>
    </location>
    <ligand>
        <name>a plastoquinone</name>
        <dbReference type="ChEBI" id="CHEBI:17757"/>
        <label>Q(A)</label>
    </ligand>
</feature>
<feature type="binding site" evidence="1">
    <location>
        <position position="213"/>
    </location>
    <ligand>
        <name>Fe cation</name>
        <dbReference type="ChEBI" id="CHEBI:24875"/>
        <note>ligand shared with heterodimeric partner</note>
    </ligand>
</feature>
<feature type="binding site" evidence="1">
    <location>
        <position position="260"/>
    </location>
    <ligand>
        <name>a plastoquinone</name>
        <dbReference type="ChEBI" id="CHEBI:17757"/>
        <label>Q(A)</label>
    </ligand>
</feature>
<feature type="binding site" evidence="1">
    <location>
        <position position="267"/>
    </location>
    <ligand>
        <name>Fe cation</name>
        <dbReference type="ChEBI" id="CHEBI:24875"/>
        <note>ligand shared with heterodimeric partner</note>
    </ligand>
</feature>
<protein>
    <recommendedName>
        <fullName evidence="1">Photosystem II D2 protein</fullName>
        <shortName evidence="1">PSII D2 protein</shortName>
        <ecNumber evidence="1">1.10.3.9</ecNumber>
    </recommendedName>
    <alternativeName>
        <fullName evidence="1">Photosystem Q(A) protein</fullName>
    </alternativeName>
</protein>
<geneLocation type="chloroplast"/>
<comment type="function">
    <text evidence="1">Photosystem II (PSII) is a light-driven water:plastoquinone oxidoreductase that uses light energy to abstract electrons from H(2)O, generating O(2) and a proton gradient subsequently used for ATP formation. It consists of a core antenna complex that captures photons, and an electron transfer chain that converts photonic excitation into a charge separation. The D1/D2 (PsbA/PsbD) reaction center heterodimer binds P680, the primary electron donor of PSII as well as several subsequent electron acceptors. D2 is needed for assembly of a stable PSII complex.</text>
</comment>
<comment type="catalytic activity">
    <reaction evidence="1">
        <text>2 a plastoquinone + 4 hnu + 2 H2O = 2 a plastoquinol + O2</text>
        <dbReference type="Rhea" id="RHEA:36359"/>
        <dbReference type="Rhea" id="RHEA-COMP:9561"/>
        <dbReference type="Rhea" id="RHEA-COMP:9562"/>
        <dbReference type="ChEBI" id="CHEBI:15377"/>
        <dbReference type="ChEBI" id="CHEBI:15379"/>
        <dbReference type="ChEBI" id="CHEBI:17757"/>
        <dbReference type="ChEBI" id="CHEBI:30212"/>
        <dbReference type="ChEBI" id="CHEBI:62192"/>
        <dbReference type="EC" id="1.10.3.9"/>
    </reaction>
</comment>
<comment type="cofactor">
    <text evidence="1">The D1/D2 heterodimer binds P680, chlorophylls that are the primary electron donor of PSII, and subsequent electron acceptors. It shares a non-heme iron and each subunit binds pheophytin, quinone, additional chlorophylls, carotenoids and lipids. There is also a Cl(-1) ion associated with D1 and D2, which is required for oxygen evolution. The PSII complex binds additional chlorophylls, carotenoids and specific lipids.</text>
</comment>
<comment type="subunit">
    <text evidence="1">PSII is composed of 1 copy each of membrane proteins PsbA, PsbB, PsbC, PsbD, PsbE, PsbF, PsbH, PsbI, PsbJ, PsbK, PsbL, PsbM, PsbT, PsbX, PsbY, PsbZ, Psb30/Ycf12, at least 3 peripheral proteins of the oxygen-evolving complex and a large number of cofactors. It forms dimeric complexes.</text>
</comment>
<comment type="subcellular location">
    <subcellularLocation>
        <location evidence="1">Plastid</location>
        <location evidence="1">Chloroplast thylakoid membrane</location>
        <topology evidence="1">Multi-pass membrane protein</topology>
    </subcellularLocation>
</comment>
<comment type="miscellaneous">
    <text evidence="1">2 of the reaction center chlorophylls (ChlD1 and ChlD2) are entirely coordinated by water.</text>
</comment>
<comment type="similarity">
    <text evidence="1">Belongs to the reaction center PufL/M/PsbA/D family.</text>
</comment>
<proteinExistence type="inferred from homology"/>